<organism>
    <name type="scientific">Geobacillus kaustophilus (strain HTA426)</name>
    <dbReference type="NCBI Taxonomy" id="235909"/>
    <lineage>
        <taxon>Bacteria</taxon>
        <taxon>Bacillati</taxon>
        <taxon>Bacillota</taxon>
        <taxon>Bacilli</taxon>
        <taxon>Bacillales</taxon>
        <taxon>Anoxybacillaceae</taxon>
        <taxon>Geobacillus</taxon>
        <taxon>Geobacillus thermoleovorans group</taxon>
    </lineage>
</organism>
<comment type="similarity">
    <text evidence="1">Belongs to the eukaryotic ribosomal protein eL8 family.</text>
</comment>
<proteinExistence type="inferred from homology"/>
<evidence type="ECO:0000255" key="1">
    <source>
        <dbReference type="HAMAP-Rule" id="MF_00574"/>
    </source>
</evidence>
<evidence type="ECO:0000305" key="2"/>
<dbReference type="EMBL" id="BA000043">
    <property type="protein sequence ID" value="BAD74385.1"/>
    <property type="molecule type" value="Genomic_DNA"/>
</dbReference>
<dbReference type="RefSeq" id="WP_011229615.1">
    <property type="nucleotide sequence ID" value="NC_006510.1"/>
</dbReference>
<dbReference type="SMR" id="Q5L403"/>
<dbReference type="STRING" id="235909.GK0100"/>
<dbReference type="KEGG" id="gka:GK0100"/>
<dbReference type="eggNOG" id="COG1358">
    <property type="taxonomic scope" value="Bacteria"/>
</dbReference>
<dbReference type="HOGENOM" id="CLU_168063_0_0_9"/>
<dbReference type="Proteomes" id="UP000001172">
    <property type="component" value="Chromosome"/>
</dbReference>
<dbReference type="GO" id="GO:0003723">
    <property type="term" value="F:RNA binding"/>
    <property type="evidence" value="ECO:0007669"/>
    <property type="project" value="UniProtKB-UniRule"/>
</dbReference>
<dbReference type="Gene3D" id="3.30.1330.30">
    <property type="match status" value="1"/>
</dbReference>
<dbReference type="HAMAP" id="MF_00574">
    <property type="entry name" value="Ribosomal_eL8_Bact"/>
    <property type="match status" value="1"/>
</dbReference>
<dbReference type="InterPro" id="IPR029064">
    <property type="entry name" value="Ribosomal_eL30-like_sf"/>
</dbReference>
<dbReference type="InterPro" id="IPR004038">
    <property type="entry name" value="Ribosomal_eL8/eL30/eS12/Gad45"/>
</dbReference>
<dbReference type="InterPro" id="IPR023460">
    <property type="entry name" value="RNA_bf_YbxF-like"/>
</dbReference>
<dbReference type="NCBIfam" id="NF010125">
    <property type="entry name" value="PRK13602.1"/>
    <property type="match status" value="1"/>
</dbReference>
<dbReference type="Pfam" id="PF01248">
    <property type="entry name" value="Ribosomal_L7Ae"/>
    <property type="match status" value="1"/>
</dbReference>
<dbReference type="SUPFAM" id="SSF55315">
    <property type="entry name" value="L30e-like"/>
    <property type="match status" value="1"/>
</dbReference>
<name>RXL7_GEOKA</name>
<feature type="chain" id="PRO_1000025041" description="RNA-binding protein GK0100">
    <location>
        <begin position="1"/>
        <end position="82"/>
    </location>
</feature>
<reference key="1">
    <citation type="journal article" date="2004" name="Nucleic Acids Res.">
        <title>Thermoadaptation trait revealed by the genome sequence of thermophilic Geobacillus kaustophilus.</title>
        <authorList>
            <person name="Takami H."/>
            <person name="Takaki Y."/>
            <person name="Chee G.-J."/>
            <person name="Nishi S."/>
            <person name="Shimamura S."/>
            <person name="Suzuki H."/>
            <person name="Matsui S."/>
            <person name="Uchiyama I."/>
        </authorList>
    </citation>
    <scope>NUCLEOTIDE SEQUENCE [LARGE SCALE GENOMIC DNA]</scope>
    <source>
        <strain>HTA426</strain>
    </source>
</reference>
<protein>
    <recommendedName>
        <fullName evidence="1">RNA-binding protein GK0100</fullName>
    </recommendedName>
    <alternativeName>
        <fullName evidence="2">Putative ribosomal protein L7Ae-like</fullName>
    </alternativeName>
    <alternativeName>
        <fullName evidence="1">Ribosomal protein eL8-like</fullName>
    </alternativeName>
</protein>
<keyword id="KW-1185">Reference proteome</keyword>
<keyword id="KW-0694">RNA-binding</keyword>
<accession>Q5L403</accession>
<gene>
    <name type="ordered locus">GK0100</name>
</gene>
<sequence length="82" mass="8588">MSYEKVLQAGKIVIGTKQTIRALKEGKAAEVIVAEDADLPIIEKVTAAANEANVPVTKVDSMKKLGKACKIQVGAAAVAILR</sequence>